<gene>
    <name type="primary">C16orf89</name>
    <name type="ORF">UNQ904/PRO1925</name>
</gene>
<accession>Q6UX73</accession>
<accession>B4DUM5</accession>
<accession>Q8N2I3</accession>
<accession>Q8N4T1</accession>
<comment type="subunit">
    <text evidence="4">Homodimer.</text>
</comment>
<comment type="subcellular location">
    <subcellularLocation>
        <location evidence="4">Secreted</location>
    </subcellularLocation>
</comment>
<comment type="alternative products">
    <event type="alternative splicing"/>
    <isoform>
        <id>Q6UX73-1</id>
        <name>1</name>
        <sequence type="displayed"/>
    </isoform>
    <isoform>
        <id>Q6UX73-2</id>
        <name>2</name>
        <sequence type="described" ref="VSP_032600"/>
    </isoform>
</comment>
<comment type="tissue specificity">
    <text evidence="4">Predominantly expressed in thyroid tissue.</text>
</comment>
<comment type="PTM">
    <text evidence="4">Glycosylated.</text>
</comment>
<comment type="miscellaneous">
    <molecule>Isoform 2</molecule>
    <text evidence="7">Major isoform, represents 80% of transcripts.</text>
</comment>
<comment type="similarity">
    <text evidence="7">Belongs to the UPF0764 family.</text>
</comment>
<comment type="sequence caution" evidence="7">
    <conflict type="erroneous initiation">
        <sequence resource="EMBL-CDS" id="AAH33681"/>
    </conflict>
    <text>Extended N-terminus.</text>
</comment>
<comment type="sequence caution" evidence="7">
    <conflict type="erroneous initiation">
        <sequence resource="EMBL-CDS" id="AAQ88847"/>
    </conflict>
    <text>Extended N-terminus.</text>
</comment>
<comment type="sequence caution" evidence="7">
    <conflict type="miscellaneous discrepancy">
        <sequence resource="EMBL-CDS" id="BAC11494"/>
    </conflict>
    <text>Aberrant splicing.</text>
</comment>
<comment type="sequence caution" evidence="7">
    <conflict type="erroneous initiation">
        <sequence resource="EMBL-CDS" id="EAW85244"/>
    </conflict>
    <text>Extended N-terminus.</text>
</comment>
<keyword id="KW-0025">Alternative splicing</keyword>
<keyword id="KW-0325">Glycoprotein</keyword>
<keyword id="KW-1267">Proteomics identification</keyword>
<keyword id="KW-1185">Reference proteome</keyword>
<keyword id="KW-0964">Secreted</keyword>
<keyword id="KW-0732">Signal</keyword>
<protein>
    <recommendedName>
        <fullName>UPF0764 protein C16orf89</fullName>
    </recommendedName>
</protein>
<name>CP089_HUMAN</name>
<evidence type="ECO:0000255" key="1"/>
<evidence type="ECO:0000269" key="2">
    <source>
    </source>
</evidence>
<evidence type="ECO:0000269" key="3">
    <source>
    </source>
</evidence>
<evidence type="ECO:0000269" key="4">
    <source>
    </source>
</evidence>
<evidence type="ECO:0000303" key="5">
    <source>
    </source>
</evidence>
<evidence type="ECO:0000303" key="6">
    <source>
    </source>
</evidence>
<evidence type="ECO:0000305" key="7"/>
<reference key="1">
    <citation type="journal article" date="2003" name="Genome Res.">
        <title>The secreted protein discovery initiative (SPDI), a large-scale effort to identify novel human secreted and transmembrane proteins: a bioinformatics assessment.</title>
        <authorList>
            <person name="Clark H.F."/>
            <person name="Gurney A.L."/>
            <person name="Abaya E."/>
            <person name="Baker K."/>
            <person name="Baldwin D.T."/>
            <person name="Brush J."/>
            <person name="Chen J."/>
            <person name="Chow B."/>
            <person name="Chui C."/>
            <person name="Crowley C."/>
            <person name="Currell B."/>
            <person name="Deuel B."/>
            <person name="Dowd P."/>
            <person name="Eaton D."/>
            <person name="Foster J.S."/>
            <person name="Grimaldi C."/>
            <person name="Gu Q."/>
            <person name="Hass P.E."/>
            <person name="Heldens S."/>
            <person name="Huang A."/>
            <person name="Kim H.S."/>
            <person name="Klimowski L."/>
            <person name="Jin Y."/>
            <person name="Johnson S."/>
            <person name="Lee J."/>
            <person name="Lewis L."/>
            <person name="Liao D."/>
            <person name="Mark M.R."/>
            <person name="Robbie E."/>
            <person name="Sanchez C."/>
            <person name="Schoenfeld J."/>
            <person name="Seshagiri S."/>
            <person name="Simmons L."/>
            <person name="Singh J."/>
            <person name="Smith V."/>
            <person name="Stinson J."/>
            <person name="Vagts A."/>
            <person name="Vandlen R.L."/>
            <person name="Watanabe C."/>
            <person name="Wieand D."/>
            <person name="Woods K."/>
            <person name="Xie M.-H."/>
            <person name="Yansura D.G."/>
            <person name="Yi S."/>
            <person name="Yu G."/>
            <person name="Yuan J."/>
            <person name="Zhang M."/>
            <person name="Zhang Z."/>
            <person name="Goddard A.D."/>
            <person name="Wood W.I."/>
            <person name="Godowski P.J."/>
            <person name="Gray A.M."/>
        </authorList>
    </citation>
    <scope>NUCLEOTIDE SEQUENCE [LARGE SCALE MRNA] (ISOFORM 1)</scope>
</reference>
<reference key="2">
    <citation type="journal article" date="2004" name="Nat. Genet.">
        <title>Complete sequencing and characterization of 21,243 full-length human cDNAs.</title>
        <authorList>
            <person name="Ota T."/>
            <person name="Suzuki Y."/>
            <person name="Nishikawa T."/>
            <person name="Otsuki T."/>
            <person name="Sugiyama T."/>
            <person name="Irie R."/>
            <person name="Wakamatsu A."/>
            <person name="Hayashi K."/>
            <person name="Sato H."/>
            <person name="Nagai K."/>
            <person name="Kimura K."/>
            <person name="Makita H."/>
            <person name="Sekine M."/>
            <person name="Obayashi M."/>
            <person name="Nishi T."/>
            <person name="Shibahara T."/>
            <person name="Tanaka T."/>
            <person name="Ishii S."/>
            <person name="Yamamoto J."/>
            <person name="Saito K."/>
            <person name="Kawai Y."/>
            <person name="Isono Y."/>
            <person name="Nakamura Y."/>
            <person name="Nagahari K."/>
            <person name="Murakami K."/>
            <person name="Yasuda T."/>
            <person name="Iwayanagi T."/>
            <person name="Wagatsuma M."/>
            <person name="Shiratori A."/>
            <person name="Sudo H."/>
            <person name="Hosoiri T."/>
            <person name="Kaku Y."/>
            <person name="Kodaira H."/>
            <person name="Kondo H."/>
            <person name="Sugawara M."/>
            <person name="Takahashi M."/>
            <person name="Kanda K."/>
            <person name="Yokoi T."/>
            <person name="Furuya T."/>
            <person name="Kikkawa E."/>
            <person name="Omura Y."/>
            <person name="Abe K."/>
            <person name="Kamihara K."/>
            <person name="Katsuta N."/>
            <person name="Sato K."/>
            <person name="Tanikawa M."/>
            <person name="Yamazaki M."/>
            <person name="Ninomiya K."/>
            <person name="Ishibashi T."/>
            <person name="Yamashita H."/>
            <person name="Murakawa K."/>
            <person name="Fujimori K."/>
            <person name="Tanai H."/>
            <person name="Kimata M."/>
            <person name="Watanabe M."/>
            <person name="Hiraoka S."/>
            <person name="Chiba Y."/>
            <person name="Ishida S."/>
            <person name="Ono Y."/>
            <person name="Takiguchi S."/>
            <person name="Watanabe S."/>
            <person name="Yosida M."/>
            <person name="Hotuta T."/>
            <person name="Kusano J."/>
            <person name="Kanehori K."/>
            <person name="Takahashi-Fujii A."/>
            <person name="Hara H."/>
            <person name="Tanase T.-O."/>
            <person name="Nomura Y."/>
            <person name="Togiya S."/>
            <person name="Komai F."/>
            <person name="Hara R."/>
            <person name="Takeuchi K."/>
            <person name="Arita M."/>
            <person name="Imose N."/>
            <person name="Musashino K."/>
            <person name="Yuuki H."/>
            <person name="Oshima A."/>
            <person name="Sasaki N."/>
            <person name="Aotsuka S."/>
            <person name="Yoshikawa Y."/>
            <person name="Matsunawa H."/>
            <person name="Ichihara T."/>
            <person name="Shiohata N."/>
            <person name="Sano S."/>
            <person name="Moriya S."/>
            <person name="Momiyama H."/>
            <person name="Satoh N."/>
            <person name="Takami S."/>
            <person name="Terashima Y."/>
            <person name="Suzuki O."/>
            <person name="Nakagawa S."/>
            <person name="Senoh A."/>
            <person name="Mizoguchi H."/>
            <person name="Goto Y."/>
            <person name="Shimizu F."/>
            <person name="Wakebe H."/>
            <person name="Hishigaki H."/>
            <person name="Watanabe T."/>
            <person name="Sugiyama A."/>
            <person name="Takemoto M."/>
            <person name="Kawakami B."/>
            <person name="Yamazaki M."/>
            <person name="Watanabe K."/>
            <person name="Kumagai A."/>
            <person name="Itakura S."/>
            <person name="Fukuzumi Y."/>
            <person name="Fujimori Y."/>
            <person name="Komiyama M."/>
            <person name="Tashiro H."/>
            <person name="Tanigami A."/>
            <person name="Fujiwara T."/>
            <person name="Ono T."/>
            <person name="Yamada K."/>
            <person name="Fujii Y."/>
            <person name="Ozaki K."/>
            <person name="Hirao M."/>
            <person name="Ohmori Y."/>
            <person name="Kawabata A."/>
            <person name="Hikiji T."/>
            <person name="Kobatake N."/>
            <person name="Inagaki H."/>
            <person name="Ikema Y."/>
            <person name="Okamoto S."/>
            <person name="Okitani R."/>
            <person name="Kawakami T."/>
            <person name="Noguchi S."/>
            <person name="Itoh T."/>
            <person name="Shigeta K."/>
            <person name="Senba T."/>
            <person name="Matsumura K."/>
            <person name="Nakajima Y."/>
            <person name="Mizuno T."/>
            <person name="Morinaga M."/>
            <person name="Sasaki M."/>
            <person name="Togashi T."/>
            <person name="Oyama M."/>
            <person name="Hata H."/>
            <person name="Watanabe M."/>
            <person name="Komatsu T."/>
            <person name="Mizushima-Sugano J."/>
            <person name="Satoh T."/>
            <person name="Shirai Y."/>
            <person name="Takahashi Y."/>
            <person name="Nakagawa K."/>
            <person name="Okumura K."/>
            <person name="Nagase T."/>
            <person name="Nomura N."/>
            <person name="Kikuchi H."/>
            <person name="Masuho Y."/>
            <person name="Yamashita R."/>
            <person name="Nakai K."/>
            <person name="Yada T."/>
            <person name="Nakamura Y."/>
            <person name="Ohara O."/>
            <person name="Isogai T."/>
            <person name="Sugano S."/>
        </authorList>
    </citation>
    <scope>NUCLEOTIDE SEQUENCE [LARGE SCALE MRNA] (ISOFORM 2)</scope>
    <source>
        <tissue>Skeletal muscle</tissue>
    </source>
</reference>
<reference key="3">
    <citation type="journal article" date="2005" name="DNA Res.">
        <title>Signal sequence and keyword trap in silico for selection of full-length human cDNAs encoding secretion or membrane proteins from oligo-capped cDNA libraries.</title>
        <authorList>
            <person name="Otsuki T."/>
            <person name="Ota T."/>
            <person name="Nishikawa T."/>
            <person name="Hayashi K."/>
            <person name="Suzuki Y."/>
            <person name="Yamamoto J."/>
            <person name="Wakamatsu A."/>
            <person name="Kimura K."/>
            <person name="Sakamoto K."/>
            <person name="Hatano N."/>
            <person name="Kawai Y."/>
            <person name="Ishii S."/>
            <person name="Saito K."/>
            <person name="Kojima S."/>
            <person name="Sugiyama T."/>
            <person name="Ono T."/>
            <person name="Okano K."/>
            <person name="Yoshikawa Y."/>
            <person name="Aotsuka S."/>
            <person name="Sasaki N."/>
            <person name="Hattori A."/>
            <person name="Okumura K."/>
            <person name="Nagai K."/>
            <person name="Sugano S."/>
            <person name="Isogai T."/>
        </authorList>
    </citation>
    <scope>NUCLEOTIDE SEQUENCE [LARGE SCALE MRNA] (ISOFORM 1)</scope>
    <scope>VARIANT HIS-363</scope>
    <source>
        <tissue>Thyroid</tissue>
    </source>
</reference>
<reference key="4">
    <citation type="submission" date="2005-09" db="EMBL/GenBank/DDBJ databases">
        <authorList>
            <person name="Mural R.J."/>
            <person name="Istrail S."/>
            <person name="Sutton G.G."/>
            <person name="Florea L."/>
            <person name="Halpern A.L."/>
            <person name="Mobarry C.M."/>
            <person name="Lippert R."/>
            <person name="Walenz B."/>
            <person name="Shatkay H."/>
            <person name="Dew I."/>
            <person name="Miller J.R."/>
            <person name="Flanigan M.J."/>
            <person name="Edwards N.J."/>
            <person name="Bolanos R."/>
            <person name="Fasulo D."/>
            <person name="Halldorsson B.V."/>
            <person name="Hannenhalli S."/>
            <person name="Turner R."/>
            <person name="Yooseph S."/>
            <person name="Lu F."/>
            <person name="Nusskern D.R."/>
            <person name="Shue B.C."/>
            <person name="Zheng X.H."/>
            <person name="Zhong F."/>
            <person name="Delcher A.L."/>
            <person name="Huson D.H."/>
            <person name="Kravitz S.A."/>
            <person name="Mouchard L."/>
            <person name="Reinert K."/>
            <person name="Remington K.A."/>
            <person name="Clark A.G."/>
            <person name="Waterman M.S."/>
            <person name="Eichler E.E."/>
            <person name="Adams M.D."/>
            <person name="Hunkapiller M.W."/>
            <person name="Myers E.W."/>
            <person name="Venter J.C."/>
        </authorList>
    </citation>
    <scope>NUCLEOTIDE SEQUENCE [LARGE SCALE GENOMIC DNA]</scope>
</reference>
<reference key="5">
    <citation type="journal article" date="2004" name="Genome Res.">
        <title>The status, quality, and expansion of the NIH full-length cDNA project: the Mammalian Gene Collection (MGC).</title>
        <authorList>
            <consortium name="The MGC Project Team"/>
        </authorList>
    </citation>
    <scope>NUCLEOTIDE SEQUENCE [LARGE SCALE MRNA] (ISOFORM 2)</scope>
    <scope>VARIANTS ALA-215 AND SER-296</scope>
    <source>
        <tissue>Colon</tissue>
    </source>
</reference>
<reference key="6">
    <citation type="journal article" date="2010" name="Thyroid">
        <title>Initial characterization of C16orf89, a novel thyroid-specific gene.</title>
        <authorList>
            <person name="Afink G.B."/>
            <person name="Veenboer G."/>
            <person name="de Randamie J."/>
            <person name="Keijser R."/>
            <person name="Meischl C."/>
            <person name="Niessen H."/>
            <person name="Ris-Stalpers C."/>
        </authorList>
    </citation>
    <scope>TISSUE SPECIFICITY</scope>
    <scope>SUBCELLULAR LOCATION</scope>
    <scope>ALTERNATIVE SPLICING</scope>
    <scope>SUBUNIT</scope>
    <scope>GLYCOSYLATION</scope>
</reference>
<feature type="signal peptide" evidence="1">
    <location>
        <begin position="1"/>
        <end position="20"/>
    </location>
</feature>
<feature type="chain" id="PRO_0000326202" description="UPF0764 protein C16orf89">
    <location>
        <begin position="21"/>
        <end position="402"/>
    </location>
</feature>
<feature type="splice variant" id="VSP_032600" description="In isoform 2." evidence="5 6">
    <original>SRSVAQAGVQWRNLGSLQPLPPGFKQFSCLILPSSWDYRSVPPYLANFYIFLVETGFHHVAHAGLELLISRDPPTSGSQSVGL</original>
    <variation>GCSSHNTATAVAALGGFLYILAEYPPANREPHPSTPPPPSSR</variation>
    <location>
        <begin position="320"/>
        <end position="402"/>
    </location>
</feature>
<feature type="sequence variant" id="VAR_057992" description="In dbSNP:rs17853191." evidence="2">
    <original>G</original>
    <variation>A</variation>
    <location>
        <position position="215"/>
    </location>
</feature>
<feature type="sequence variant" id="VAR_040004" description="In dbSNP:rs1127920." evidence="2">
    <original>L</original>
    <variation>S</variation>
    <location>
        <position position="296"/>
    </location>
</feature>
<feature type="sequence variant" id="VAR_040005" description="In dbSNP:rs11642955." evidence="3">
    <original>Y</original>
    <variation>H</variation>
    <location>
        <position position="363"/>
    </location>
</feature>
<feature type="sequence conflict" description="In Ref. 2; BAG62387." evidence="7" ref="2">
    <original>E</original>
    <variation>G</variation>
    <location>
        <position position="77"/>
    </location>
</feature>
<feature type="sequence conflict" description="In Ref. 2; BAG62387." evidence="7" ref="2">
    <original>M</original>
    <variation>V</variation>
    <location>
        <position position="94"/>
    </location>
</feature>
<organism>
    <name type="scientific">Homo sapiens</name>
    <name type="common">Human</name>
    <dbReference type="NCBI Taxonomy" id="9606"/>
    <lineage>
        <taxon>Eukaryota</taxon>
        <taxon>Metazoa</taxon>
        <taxon>Chordata</taxon>
        <taxon>Craniata</taxon>
        <taxon>Vertebrata</taxon>
        <taxon>Euteleostomi</taxon>
        <taxon>Mammalia</taxon>
        <taxon>Eutheria</taxon>
        <taxon>Euarchontoglires</taxon>
        <taxon>Primates</taxon>
        <taxon>Haplorrhini</taxon>
        <taxon>Catarrhini</taxon>
        <taxon>Hominidae</taxon>
        <taxon>Homo</taxon>
    </lineage>
</organism>
<proteinExistence type="evidence at protein level"/>
<sequence length="402" mass="45391">MASLGLLLLLLLTALPPLWSSSLPGLDTAESKATIADLILSALERATVFLEQRLPEINLDGMVGVRVLEEQLKSVREKWAQEPLLQPLSLRVGMLGEKLEAAIQRSLHYLKLSDPKYLREFQLTLQPGFWKLPHAWIHTDASLVYPTFGPQDSFSEERSDVCLVQLLGTGTDSSEPCGLSDLCRSLMTKPGCSGYCLSHQLLFFLWARMRGCTQGPLQQSQDYINLFCANMMDLNRRAEAIGYAYPTRDIFMENIMFCGMGGFSDFYKLRWLEAILSWQKQQEGCFGEPDAEDEELSKAIQYQQHFSRRVKRREKQFPDSRSVAQAGVQWRNLGSLQPLPPGFKQFSCLILPSSWDYRSVPPYLANFYIFLVETGFHHVAHAGLELLISRDPPTSGSQSVGL</sequence>
<dbReference type="EMBL" id="AY358483">
    <property type="protein sequence ID" value="AAQ88847.1"/>
    <property type="status" value="ALT_INIT"/>
    <property type="molecule type" value="mRNA"/>
</dbReference>
<dbReference type="EMBL" id="AK300708">
    <property type="protein sequence ID" value="BAG62387.1"/>
    <property type="molecule type" value="mRNA"/>
</dbReference>
<dbReference type="EMBL" id="AK075242">
    <property type="protein sequence ID" value="BAC11494.1"/>
    <property type="status" value="ALT_SEQ"/>
    <property type="molecule type" value="mRNA"/>
</dbReference>
<dbReference type="EMBL" id="CH471112">
    <property type="protein sequence ID" value="EAW85244.1"/>
    <property type="status" value="ALT_INIT"/>
    <property type="molecule type" value="Genomic_DNA"/>
</dbReference>
<dbReference type="EMBL" id="BC033681">
    <property type="protein sequence ID" value="AAH33681.1"/>
    <property type="status" value="ALT_INIT"/>
    <property type="molecule type" value="mRNA"/>
</dbReference>
<dbReference type="CCDS" id="CCDS42116.2">
    <molecule id="Q6UX73-1"/>
</dbReference>
<dbReference type="CCDS" id="CCDS45404.2">
    <molecule id="Q6UX73-2"/>
</dbReference>
<dbReference type="RefSeq" id="NP_001091984.2">
    <molecule id="Q6UX73-2"/>
    <property type="nucleotide sequence ID" value="NM_001098514.3"/>
</dbReference>
<dbReference type="RefSeq" id="NP_689672.4">
    <molecule id="Q6UX73-1"/>
    <property type="nucleotide sequence ID" value="NM_152459.4"/>
</dbReference>
<dbReference type="BioGRID" id="126998">
    <property type="interactions" value="1"/>
</dbReference>
<dbReference type="FunCoup" id="Q6UX73">
    <property type="interactions" value="49"/>
</dbReference>
<dbReference type="IntAct" id="Q6UX73">
    <property type="interactions" value="2"/>
</dbReference>
<dbReference type="MINT" id="Q6UX73"/>
<dbReference type="STRING" id="9606.ENSP00000324672"/>
<dbReference type="GlyCosmos" id="Q6UX73">
    <property type="glycosylation" value="1 site, 1 glycan"/>
</dbReference>
<dbReference type="GlyGen" id="Q6UX73">
    <property type="glycosylation" value="1 site, 1 O-linked glycan (1 site)"/>
</dbReference>
<dbReference type="iPTMnet" id="Q6UX73"/>
<dbReference type="PhosphoSitePlus" id="Q6UX73"/>
<dbReference type="BioMuta" id="C16orf89"/>
<dbReference type="DMDM" id="172046150"/>
<dbReference type="jPOST" id="Q6UX73"/>
<dbReference type="MassIVE" id="Q6UX73"/>
<dbReference type="PaxDb" id="9606-ENSP00000324672"/>
<dbReference type="PeptideAtlas" id="Q6UX73"/>
<dbReference type="ProteomicsDB" id="67575">
    <molecule id="Q6UX73-1"/>
</dbReference>
<dbReference type="ProteomicsDB" id="67576">
    <molecule id="Q6UX73-2"/>
</dbReference>
<dbReference type="Antibodypedia" id="2199">
    <property type="antibodies" value="16 antibodies from 8 providers"/>
</dbReference>
<dbReference type="DNASU" id="146556"/>
<dbReference type="Ensembl" id="ENST00000315997.5">
    <molecule id="Q6UX73-1"/>
    <property type="protein sequence ID" value="ENSP00000324672.5"/>
    <property type="gene ID" value="ENSG00000153446.16"/>
</dbReference>
<dbReference type="Ensembl" id="ENST00000472572.8">
    <molecule id="Q6UX73-2"/>
    <property type="protein sequence ID" value="ENSP00000420566.2"/>
    <property type="gene ID" value="ENSG00000153446.16"/>
</dbReference>
<dbReference type="GeneID" id="146556"/>
<dbReference type="KEGG" id="hsa:146556"/>
<dbReference type="MANE-Select" id="ENST00000472572.8">
    <molecule id="Q6UX73-2"/>
    <property type="protein sequence ID" value="ENSP00000420566.2"/>
    <property type="RefSeq nucleotide sequence ID" value="NM_001098514.3"/>
    <property type="RefSeq protein sequence ID" value="NP_001091984.2"/>
</dbReference>
<dbReference type="UCSC" id="uc002cyk.5">
    <molecule id="Q6UX73-1"/>
    <property type="organism name" value="human"/>
</dbReference>
<dbReference type="AGR" id="HGNC:28687"/>
<dbReference type="CTD" id="146556"/>
<dbReference type="DisGeNET" id="146556"/>
<dbReference type="GeneCards" id="C16orf89"/>
<dbReference type="HGNC" id="HGNC:28687">
    <property type="gene designation" value="C16orf89"/>
</dbReference>
<dbReference type="HPA" id="ENSG00000153446">
    <property type="expression patterns" value="Tissue enhanced (lung, thyroid gland)"/>
</dbReference>
<dbReference type="neXtProt" id="NX_Q6UX73"/>
<dbReference type="OpenTargets" id="ENSG00000153446"/>
<dbReference type="PharmGKB" id="PA162378486"/>
<dbReference type="VEuPathDB" id="HostDB:ENSG00000153446"/>
<dbReference type="eggNOG" id="ENOG502RBYN">
    <property type="taxonomic scope" value="Eukaryota"/>
</dbReference>
<dbReference type="GeneTree" id="ENSGT00390000013433"/>
<dbReference type="HOGENOM" id="CLU_051286_1_0_1"/>
<dbReference type="InParanoid" id="Q6UX73"/>
<dbReference type="OMA" id="MTRPGCS"/>
<dbReference type="OrthoDB" id="5949187at2759"/>
<dbReference type="PAN-GO" id="Q6UX73">
    <property type="GO annotations" value="2 GO annotations based on evolutionary models"/>
</dbReference>
<dbReference type="PhylomeDB" id="Q6UX73"/>
<dbReference type="PathwayCommons" id="Q6UX73"/>
<dbReference type="SignaLink" id="Q6UX73"/>
<dbReference type="BioGRID-ORCS" id="146556">
    <property type="hits" value="21 hits in 1127 CRISPR screens"/>
</dbReference>
<dbReference type="ChiTaRS" id="C16orf89">
    <property type="organism name" value="human"/>
</dbReference>
<dbReference type="GenomeRNAi" id="146556"/>
<dbReference type="Pharos" id="Q6UX73">
    <property type="development level" value="Tbio"/>
</dbReference>
<dbReference type="PRO" id="PR:Q6UX73"/>
<dbReference type="Proteomes" id="UP000005640">
    <property type="component" value="Chromosome 16"/>
</dbReference>
<dbReference type="RNAct" id="Q6UX73">
    <property type="molecule type" value="protein"/>
</dbReference>
<dbReference type="Bgee" id="ENSG00000153446">
    <property type="expression patterns" value="Expressed in left lobe of thyroid gland and 144 other cell types or tissues"/>
</dbReference>
<dbReference type="ExpressionAtlas" id="Q6UX73">
    <property type="expression patterns" value="baseline and differential"/>
</dbReference>
<dbReference type="GO" id="GO:0005829">
    <property type="term" value="C:cytosol"/>
    <property type="evidence" value="ECO:0000314"/>
    <property type="project" value="UniProtKB"/>
</dbReference>
<dbReference type="GO" id="GO:0070062">
    <property type="term" value="C:extracellular exosome"/>
    <property type="evidence" value="ECO:0007005"/>
    <property type="project" value="UniProtKB"/>
</dbReference>
<dbReference type="GO" id="GO:0016020">
    <property type="term" value="C:membrane"/>
    <property type="evidence" value="ECO:0000314"/>
    <property type="project" value="UniProtKB"/>
</dbReference>
<dbReference type="GO" id="GO:0042803">
    <property type="term" value="F:protein homodimerization activity"/>
    <property type="evidence" value="ECO:0000353"/>
    <property type="project" value="UniProtKB"/>
</dbReference>
<dbReference type="InterPro" id="IPR031751">
    <property type="entry name" value="DUF4735"/>
</dbReference>
<dbReference type="PANTHER" id="PTHR33539">
    <property type="entry name" value="UPF0764 PROTEIN C16ORF89"/>
    <property type="match status" value="1"/>
</dbReference>
<dbReference type="PANTHER" id="PTHR33539:SF1">
    <property type="entry name" value="UPF0764 PROTEIN C16ORF89"/>
    <property type="match status" value="1"/>
</dbReference>
<dbReference type="Pfam" id="PF15882">
    <property type="entry name" value="DUF4735"/>
    <property type="match status" value="1"/>
</dbReference>
<dbReference type="PRINTS" id="PR02045">
    <property type="entry name" value="F138DOMAIN"/>
</dbReference>